<dbReference type="EMBL" id="FM180568">
    <property type="protein sequence ID" value="CAS08135.1"/>
    <property type="molecule type" value="Genomic_DNA"/>
</dbReference>
<dbReference type="RefSeq" id="WP_000741161.1">
    <property type="nucleotide sequence ID" value="NC_011601.1"/>
</dbReference>
<dbReference type="SMR" id="B7UKX7"/>
<dbReference type="KEGG" id="ecg:E2348C_0587"/>
<dbReference type="HOGENOM" id="CLU_018614_3_0_6"/>
<dbReference type="Proteomes" id="UP000008205">
    <property type="component" value="Chromosome"/>
</dbReference>
<dbReference type="GO" id="GO:0005886">
    <property type="term" value="C:plasma membrane"/>
    <property type="evidence" value="ECO:0007669"/>
    <property type="project" value="UniProtKB-SubCell"/>
</dbReference>
<dbReference type="GO" id="GO:0008556">
    <property type="term" value="F:P-type potassium transmembrane transporter activity"/>
    <property type="evidence" value="ECO:0007669"/>
    <property type="project" value="InterPro"/>
</dbReference>
<dbReference type="GO" id="GO:0030955">
    <property type="term" value="F:potassium ion binding"/>
    <property type="evidence" value="ECO:0007669"/>
    <property type="project" value="UniProtKB-UniRule"/>
</dbReference>
<dbReference type="HAMAP" id="MF_00275">
    <property type="entry name" value="KdpA"/>
    <property type="match status" value="1"/>
</dbReference>
<dbReference type="InterPro" id="IPR004623">
    <property type="entry name" value="KdpA"/>
</dbReference>
<dbReference type="NCBIfam" id="TIGR00680">
    <property type="entry name" value="kdpA"/>
    <property type="match status" value="1"/>
</dbReference>
<dbReference type="PANTHER" id="PTHR30607">
    <property type="entry name" value="POTASSIUM-TRANSPORTING ATPASE A CHAIN"/>
    <property type="match status" value="1"/>
</dbReference>
<dbReference type="PANTHER" id="PTHR30607:SF2">
    <property type="entry name" value="POTASSIUM-TRANSPORTING ATPASE POTASSIUM-BINDING SUBUNIT"/>
    <property type="match status" value="1"/>
</dbReference>
<dbReference type="Pfam" id="PF03814">
    <property type="entry name" value="KdpA"/>
    <property type="match status" value="1"/>
</dbReference>
<dbReference type="PIRSF" id="PIRSF001294">
    <property type="entry name" value="K_ATPaseA"/>
    <property type="match status" value="1"/>
</dbReference>
<gene>
    <name evidence="1" type="primary">kdpA</name>
    <name type="ordered locus">E2348C_0587</name>
</gene>
<proteinExistence type="inferred from homology"/>
<keyword id="KW-0997">Cell inner membrane</keyword>
<keyword id="KW-1003">Cell membrane</keyword>
<keyword id="KW-0406">Ion transport</keyword>
<keyword id="KW-0472">Membrane</keyword>
<keyword id="KW-0630">Potassium</keyword>
<keyword id="KW-0633">Potassium transport</keyword>
<keyword id="KW-1185">Reference proteome</keyword>
<keyword id="KW-0812">Transmembrane</keyword>
<keyword id="KW-1133">Transmembrane helix</keyword>
<keyword id="KW-0813">Transport</keyword>
<evidence type="ECO:0000255" key="1">
    <source>
        <dbReference type="HAMAP-Rule" id="MF_00275"/>
    </source>
</evidence>
<comment type="function">
    <text evidence="1">Part of the high-affinity ATP-driven potassium transport (or Kdp) system, which catalyzes the hydrolysis of ATP coupled with the electrogenic transport of potassium into the cytoplasm. This subunit binds the periplasmic potassium ions and delivers the ions to the membrane domain of KdpB through an intramembrane tunnel.</text>
</comment>
<comment type="subunit">
    <text evidence="1">The system is composed of three essential subunits: KdpA, KdpB and KdpC.</text>
</comment>
<comment type="subcellular location">
    <subcellularLocation>
        <location evidence="1">Cell inner membrane</location>
        <topology evidence="1">Multi-pass membrane protein</topology>
    </subcellularLocation>
</comment>
<comment type="similarity">
    <text evidence="1">Belongs to the KdpA family.</text>
</comment>
<reference key="1">
    <citation type="journal article" date="2009" name="J. Bacteriol.">
        <title>Complete genome sequence and comparative genome analysis of enteropathogenic Escherichia coli O127:H6 strain E2348/69.</title>
        <authorList>
            <person name="Iguchi A."/>
            <person name="Thomson N.R."/>
            <person name="Ogura Y."/>
            <person name="Saunders D."/>
            <person name="Ooka T."/>
            <person name="Henderson I.R."/>
            <person name="Harris D."/>
            <person name="Asadulghani M."/>
            <person name="Kurokawa K."/>
            <person name="Dean P."/>
            <person name="Kenny B."/>
            <person name="Quail M.A."/>
            <person name="Thurston S."/>
            <person name="Dougan G."/>
            <person name="Hayashi T."/>
            <person name="Parkhill J."/>
            <person name="Frankel G."/>
        </authorList>
    </citation>
    <scope>NUCLEOTIDE SEQUENCE [LARGE SCALE GENOMIC DNA]</scope>
    <source>
        <strain>E2348/69 / EPEC</strain>
    </source>
</reference>
<accession>B7UKX7</accession>
<name>KDPA_ECO27</name>
<organism>
    <name type="scientific">Escherichia coli O127:H6 (strain E2348/69 / EPEC)</name>
    <dbReference type="NCBI Taxonomy" id="574521"/>
    <lineage>
        <taxon>Bacteria</taxon>
        <taxon>Pseudomonadati</taxon>
        <taxon>Pseudomonadota</taxon>
        <taxon>Gammaproteobacteria</taxon>
        <taxon>Enterobacterales</taxon>
        <taxon>Enterobacteriaceae</taxon>
        <taxon>Escherichia</taxon>
    </lineage>
</organism>
<sequence length="557" mass="59076">MAAQGFLLIATFLLVLMVLARPLGSGLARLINDIPLPGTTGVERVLFSTLGVSDREMNWKQYLSAILGLNILGLAVLFFMLLGQHYLPLNPQQLPGLSWDLALNTAVSFVTNTNWQSYSGETTLSYFSQMAGLTVQNFLSAASGIAVIFALIRAFTRQSMNTLGNAWVDLLRITLWVLTPVALLIALFFIQQGVLQNFLPYQAVTTIEGAQQLLPMGPVASQEAIKMLGTNGGGFFNANSSHPFENPTALTNFVQMLAIFLIPTALCFAFGEVAGDRRQGRMLLWAMSVIFVICVGVVMWAEVQGNPHLLALGADSSINMEGKESRFGVLVSSLFAVVTTAASCGAVIAMHDSFTALGGMVPMWLMQIGEVVFGGVGSGLYGMMLFVLLAVFIAGLMIGRTPEYLGKKIDVREMKLTALAILVTPTLVLMGAALAMMTDAGRSAMLNPGPHGFSEVLYAVSSAANNNGSAFAGLSANSPFWNCLLALCMFVGRFGVIIPVMAIAGSLVSKKSQPASSGTLPTHGPLFVGLLIGTVLLVGALTFIPALALGPVAEYLS</sequence>
<protein>
    <recommendedName>
        <fullName evidence="1">Potassium-transporting ATPase potassium-binding subunit</fullName>
    </recommendedName>
    <alternativeName>
        <fullName evidence="1">ATP phosphohydrolase [potassium-transporting] A chain</fullName>
    </alternativeName>
    <alternativeName>
        <fullName evidence="1">Potassium-binding and translocating subunit A</fullName>
    </alternativeName>
    <alternativeName>
        <fullName evidence="1">Potassium-translocating ATPase A chain</fullName>
    </alternativeName>
</protein>
<feature type="chain" id="PRO_1000190736" description="Potassium-transporting ATPase potassium-binding subunit">
    <location>
        <begin position="1"/>
        <end position="557"/>
    </location>
</feature>
<feature type="transmembrane region" description="Helical" evidence="1">
    <location>
        <begin position="5"/>
        <end position="25"/>
    </location>
</feature>
<feature type="transmembrane region" description="Helical" evidence="1">
    <location>
        <begin position="63"/>
        <end position="83"/>
    </location>
</feature>
<feature type="transmembrane region" description="Helical" evidence="1">
    <location>
        <begin position="132"/>
        <end position="152"/>
    </location>
</feature>
<feature type="transmembrane region" description="Helical" evidence="1">
    <location>
        <begin position="170"/>
        <end position="190"/>
    </location>
</feature>
<feature type="transmembrane region" description="Helical" evidence="1">
    <location>
        <begin position="253"/>
        <end position="273"/>
    </location>
</feature>
<feature type="transmembrane region" description="Helical" evidence="1">
    <location>
        <begin position="283"/>
        <end position="303"/>
    </location>
</feature>
<feature type="transmembrane region" description="Helical" evidence="1">
    <location>
        <begin position="329"/>
        <end position="349"/>
    </location>
</feature>
<feature type="transmembrane region" description="Helical" evidence="1">
    <location>
        <begin position="356"/>
        <end position="376"/>
    </location>
</feature>
<feature type="transmembrane region" description="Helical" evidence="1">
    <location>
        <begin position="379"/>
        <end position="399"/>
    </location>
</feature>
<feature type="transmembrane region" description="Helical" evidence="1">
    <location>
        <begin position="416"/>
        <end position="436"/>
    </location>
</feature>
<feature type="transmembrane region" description="Helical" evidence="1">
    <location>
        <begin position="484"/>
        <end position="504"/>
    </location>
</feature>
<feature type="transmembrane region" description="Helical" evidence="1">
    <location>
        <begin position="526"/>
        <end position="546"/>
    </location>
</feature>